<dbReference type="EMBL" id="AC138355">
    <property type="status" value="NOT_ANNOTATED_CDS"/>
    <property type="molecule type" value="Genomic_DNA"/>
</dbReference>
<dbReference type="CCDS" id="CCDS22196.1"/>
<dbReference type="RefSeq" id="NP_033749.2">
    <property type="nucleotide sequence ID" value="NM_009619.5"/>
</dbReference>
<dbReference type="SMR" id="F8VQ03"/>
<dbReference type="FunCoup" id="F8VQ03">
    <property type="interactions" value="4"/>
</dbReference>
<dbReference type="STRING" id="10090.ENSMUSP00000033958"/>
<dbReference type="SwissPalm" id="F8VQ03"/>
<dbReference type="PaxDb" id="10090-ENSMUSP00000033958"/>
<dbReference type="ProteomicsDB" id="285615"/>
<dbReference type="DNASU" id="11497"/>
<dbReference type="Ensembl" id="ENSMUST00000033958.15">
    <property type="protein sequence ID" value="ENSMUSP00000033958.8"/>
    <property type="gene ID" value="ENSMUSG00000031553.17"/>
</dbReference>
<dbReference type="Ensembl" id="ENSMUST00000171438.8">
    <property type="protein sequence ID" value="ENSMUSP00000132651.2"/>
    <property type="gene ID" value="ENSMUSG00000031553.17"/>
</dbReference>
<dbReference type="GeneID" id="11497"/>
<dbReference type="KEGG" id="mmu:11497"/>
<dbReference type="UCSC" id="uc009lfc.1">
    <property type="organism name" value="mouse"/>
</dbReference>
<dbReference type="AGR" id="MGI:102518"/>
<dbReference type="CTD" id="11497"/>
<dbReference type="MGI" id="MGI:102518">
    <property type="gene designation" value="Adam3"/>
</dbReference>
<dbReference type="VEuPathDB" id="HostDB:ENSMUSG00000031553"/>
<dbReference type="eggNOG" id="KOG3607">
    <property type="taxonomic scope" value="Eukaryota"/>
</dbReference>
<dbReference type="GeneTree" id="ENSGT00940000162466"/>
<dbReference type="HOGENOM" id="CLU_012714_4_3_1"/>
<dbReference type="InParanoid" id="F8VQ03"/>
<dbReference type="OMA" id="MKFFSSC"/>
<dbReference type="OrthoDB" id="5951731at2759"/>
<dbReference type="PhylomeDB" id="F8VQ03"/>
<dbReference type="TreeFam" id="TF314733"/>
<dbReference type="BioGRID-ORCS" id="11497">
    <property type="hits" value="1 hit in 76 CRISPR screens"/>
</dbReference>
<dbReference type="ChiTaRS" id="Adam3">
    <property type="organism name" value="mouse"/>
</dbReference>
<dbReference type="PRO" id="PR:F8VQ03"/>
<dbReference type="Proteomes" id="UP000000589">
    <property type="component" value="Chromosome 8"/>
</dbReference>
<dbReference type="RNAct" id="F8VQ03">
    <property type="molecule type" value="protein"/>
</dbReference>
<dbReference type="Bgee" id="ENSMUSG00000031553">
    <property type="expression patterns" value="Expressed in spermatid and 20 other cell types or tissues"/>
</dbReference>
<dbReference type="ExpressionAtlas" id="F8VQ03">
    <property type="expression patterns" value="baseline and differential"/>
</dbReference>
<dbReference type="GO" id="GO:0009986">
    <property type="term" value="C:cell surface"/>
    <property type="evidence" value="ECO:0000314"/>
    <property type="project" value="MGI"/>
</dbReference>
<dbReference type="GO" id="GO:0045121">
    <property type="term" value="C:membrane raft"/>
    <property type="evidence" value="ECO:0000314"/>
    <property type="project" value="MGI"/>
</dbReference>
<dbReference type="GO" id="GO:0005886">
    <property type="term" value="C:plasma membrane"/>
    <property type="evidence" value="ECO:0000314"/>
    <property type="project" value="UniProtKB"/>
</dbReference>
<dbReference type="GO" id="GO:0032991">
    <property type="term" value="C:protein-containing complex"/>
    <property type="evidence" value="ECO:0000314"/>
    <property type="project" value="MGI"/>
</dbReference>
<dbReference type="GO" id="GO:0061827">
    <property type="term" value="C:sperm head"/>
    <property type="evidence" value="ECO:0000314"/>
    <property type="project" value="UniProtKB"/>
</dbReference>
<dbReference type="GO" id="GO:0004222">
    <property type="term" value="F:metalloendopeptidase activity"/>
    <property type="evidence" value="ECO:0007669"/>
    <property type="project" value="InterPro"/>
</dbReference>
<dbReference type="GO" id="GO:0007339">
    <property type="term" value="P:binding of sperm to zona pellucida"/>
    <property type="evidence" value="ECO:0000314"/>
    <property type="project" value="MGI"/>
</dbReference>
<dbReference type="GO" id="GO:0009566">
    <property type="term" value="P:fertilization"/>
    <property type="evidence" value="ECO:0000315"/>
    <property type="project" value="UniProtKB"/>
</dbReference>
<dbReference type="GO" id="GO:0030317">
    <property type="term" value="P:flagellated sperm motility"/>
    <property type="evidence" value="ECO:0000315"/>
    <property type="project" value="UniProtKB"/>
</dbReference>
<dbReference type="GO" id="GO:0010467">
    <property type="term" value="P:gene expression"/>
    <property type="evidence" value="ECO:0000315"/>
    <property type="project" value="MGI"/>
</dbReference>
<dbReference type="GO" id="GO:0010628">
    <property type="term" value="P:positive regulation of gene expression"/>
    <property type="evidence" value="ECO:0000315"/>
    <property type="project" value="MGI"/>
</dbReference>
<dbReference type="GO" id="GO:0006508">
    <property type="term" value="P:proteolysis"/>
    <property type="evidence" value="ECO:0007669"/>
    <property type="project" value="InterPro"/>
</dbReference>
<dbReference type="GO" id="GO:0050684">
    <property type="term" value="P:regulation of mRNA processing"/>
    <property type="evidence" value="ECO:0000315"/>
    <property type="project" value="MGI"/>
</dbReference>
<dbReference type="GO" id="GO:0007338">
    <property type="term" value="P:single fertilization"/>
    <property type="evidence" value="ECO:0000316"/>
    <property type="project" value="MGI"/>
</dbReference>
<dbReference type="CDD" id="cd00054">
    <property type="entry name" value="EGF_CA"/>
    <property type="match status" value="1"/>
</dbReference>
<dbReference type="CDD" id="cd04269">
    <property type="entry name" value="ZnMc_adamalysin_II_like"/>
    <property type="match status" value="1"/>
</dbReference>
<dbReference type="FunFam" id="4.10.70.10:FF:000001">
    <property type="entry name" value="Disintegrin and metalloproteinase domain-containing protein 22"/>
    <property type="match status" value="1"/>
</dbReference>
<dbReference type="Gene3D" id="3.40.390.10">
    <property type="entry name" value="Collagenase (Catalytic Domain)"/>
    <property type="match status" value="1"/>
</dbReference>
<dbReference type="Gene3D" id="4.10.70.10">
    <property type="entry name" value="Disintegrin domain"/>
    <property type="match status" value="1"/>
</dbReference>
<dbReference type="InterPro" id="IPR006586">
    <property type="entry name" value="ADAM_Cys-rich"/>
</dbReference>
<dbReference type="InterPro" id="IPR001762">
    <property type="entry name" value="Disintegrin_dom"/>
</dbReference>
<dbReference type="InterPro" id="IPR036436">
    <property type="entry name" value="Disintegrin_dom_sf"/>
</dbReference>
<dbReference type="InterPro" id="IPR000742">
    <property type="entry name" value="EGF-like_dom"/>
</dbReference>
<dbReference type="InterPro" id="IPR013111">
    <property type="entry name" value="EGF_extracell"/>
</dbReference>
<dbReference type="InterPro" id="IPR024079">
    <property type="entry name" value="MetalloPept_cat_dom_sf"/>
</dbReference>
<dbReference type="InterPro" id="IPR001590">
    <property type="entry name" value="Peptidase_M12B"/>
</dbReference>
<dbReference type="InterPro" id="IPR002870">
    <property type="entry name" value="Peptidase_M12B_N"/>
</dbReference>
<dbReference type="InterPro" id="IPR034027">
    <property type="entry name" value="Reprolysin_adamalysin"/>
</dbReference>
<dbReference type="PANTHER" id="PTHR11905:SF26">
    <property type="entry name" value="A DISINTEGRIN AND METALLOPEPTIDASE DOMAIN 3"/>
    <property type="match status" value="1"/>
</dbReference>
<dbReference type="PANTHER" id="PTHR11905">
    <property type="entry name" value="ADAM A DISINTEGRIN AND METALLOPROTEASE DOMAIN"/>
    <property type="match status" value="1"/>
</dbReference>
<dbReference type="Pfam" id="PF08516">
    <property type="entry name" value="ADAM_CR"/>
    <property type="match status" value="1"/>
</dbReference>
<dbReference type="Pfam" id="PF00200">
    <property type="entry name" value="Disintegrin"/>
    <property type="match status" value="1"/>
</dbReference>
<dbReference type="Pfam" id="PF07974">
    <property type="entry name" value="EGF_2"/>
    <property type="match status" value="1"/>
</dbReference>
<dbReference type="Pfam" id="PF01562">
    <property type="entry name" value="Pep_M12B_propep"/>
    <property type="match status" value="1"/>
</dbReference>
<dbReference type="Pfam" id="PF01421">
    <property type="entry name" value="Reprolysin"/>
    <property type="match status" value="1"/>
</dbReference>
<dbReference type="SMART" id="SM00608">
    <property type="entry name" value="ACR"/>
    <property type="match status" value="1"/>
</dbReference>
<dbReference type="SMART" id="SM00050">
    <property type="entry name" value="DISIN"/>
    <property type="match status" value="1"/>
</dbReference>
<dbReference type="SUPFAM" id="SSF57552">
    <property type="entry name" value="Blood coagulation inhibitor (disintegrin)"/>
    <property type="match status" value="1"/>
</dbReference>
<dbReference type="SUPFAM" id="SSF55486">
    <property type="entry name" value="Metalloproteases ('zincins'), catalytic domain"/>
    <property type="match status" value="1"/>
</dbReference>
<dbReference type="PROSITE" id="PS50215">
    <property type="entry name" value="ADAM_MEPRO"/>
    <property type="match status" value="1"/>
</dbReference>
<dbReference type="PROSITE" id="PS50214">
    <property type="entry name" value="DISINTEGRIN_2"/>
    <property type="match status" value="1"/>
</dbReference>
<dbReference type="PROSITE" id="PS01186">
    <property type="entry name" value="EGF_2"/>
    <property type="match status" value="1"/>
</dbReference>
<dbReference type="PROSITE" id="PS50026">
    <property type="entry name" value="EGF_3"/>
    <property type="match status" value="1"/>
</dbReference>
<reference key="1">
    <citation type="journal article" date="2009" name="PLoS Biol.">
        <title>Lineage-specific biology revealed by a finished genome assembly of the mouse.</title>
        <authorList>
            <person name="Church D.M."/>
            <person name="Goodstadt L."/>
            <person name="Hillier L.W."/>
            <person name="Zody M.C."/>
            <person name="Goldstein S."/>
            <person name="She X."/>
            <person name="Bult C.J."/>
            <person name="Agarwala R."/>
            <person name="Cherry J.L."/>
            <person name="DiCuccio M."/>
            <person name="Hlavina W."/>
            <person name="Kapustin Y."/>
            <person name="Meric P."/>
            <person name="Maglott D."/>
            <person name="Birtle Z."/>
            <person name="Marques A.C."/>
            <person name="Graves T."/>
            <person name="Zhou S."/>
            <person name="Teague B."/>
            <person name="Potamousis K."/>
            <person name="Churas C."/>
            <person name="Place M."/>
            <person name="Herschleb J."/>
            <person name="Runnheim R."/>
            <person name="Forrest D."/>
            <person name="Amos-Landgraf J."/>
            <person name="Schwartz D.C."/>
            <person name="Cheng Z."/>
            <person name="Lindblad-Toh K."/>
            <person name="Eichler E.E."/>
            <person name="Ponting C.P."/>
        </authorList>
    </citation>
    <scope>NUCLEOTIDE SEQUENCE [LARGE SCALE GENOMIC DNA]</scope>
    <source>
        <strain>C57BL/6J</strain>
    </source>
</reference>
<reference key="2">
    <citation type="journal article" date="2001" name="Biochem. J.">
        <title>Human cyritestin genes (CYRN1 and CYRN2) are non-functional.</title>
        <authorList>
            <person name="Grzmil P."/>
            <person name="Kim Y."/>
            <person name="Shamsadin R."/>
            <person name="Neesen J."/>
            <person name="Adham I.M."/>
            <person name="Heinlein U.A."/>
            <person name="Schwarzer U.J."/>
            <person name="Engel W."/>
        </authorList>
    </citation>
    <scope>CHARACTERIZATION</scope>
</reference>
<reference key="3">
    <citation type="journal article" date="2004" name="J. Reprod. Dev.">
        <title>Synthesis, processing, and subcellular localization of mouse ADAM3 during spermatogenesis and epididymal sperm transport.</title>
        <authorList>
            <person name="Kim E."/>
            <person name="Nishimura H."/>
            <person name="Iwase S."/>
            <person name="Yamagata K."/>
            <person name="Kashiwabara S."/>
            <person name="Baba T."/>
        </authorList>
    </citation>
    <scope>SUBCELLULAR LOCATION</scope>
    <scope>PROCESSING</scope>
</reference>
<reference key="4">
    <citation type="journal article" date="2009" name="Biol. Reprod.">
        <title>Disruption of ADAM3 impairs the migration of sperm into oviduct in mouse.</title>
        <authorList>
            <person name="Yamaguchi R."/>
            <person name="Muro Y."/>
            <person name="Isotani A."/>
            <person name="Tokuhiro K."/>
            <person name="Takumi K."/>
            <person name="Adham I."/>
            <person name="Ikawa M."/>
            <person name="Okabe M."/>
        </authorList>
    </citation>
    <scope>FUNCTION</scope>
</reference>
<reference key="5">
    <citation type="journal article" date="2011" name="J. Cell. Physiol.">
        <title>Identification of heat shock protein 5, calnexin and integral membrane protein 2B as Adam7-interacting membrane proteins in mouse sperm.</title>
        <authorList>
            <person name="Han C."/>
            <person name="Park I."/>
            <person name="Lee B."/>
            <person name="Jin S."/>
            <person name="Choi H."/>
            <person name="Kwon J.T."/>
            <person name="Kwon Y.I."/>
            <person name="Kim D.H."/>
            <person name="Park Z.Y."/>
            <person name="Cho C."/>
        </authorList>
    </citation>
    <scope>TISSUE SPECIFICITY</scope>
</reference>
<reference key="6">
    <citation type="journal article" date="2013" name="Proc. Natl. Acad. Sci. U.S.A.">
        <title>Expression of TEX101, regulated by ACE, is essential for the production of fertile mouse spermatozoa.</title>
        <authorList>
            <person name="Fujihara Y."/>
            <person name="Tokuhiro K."/>
            <person name="Muro Y."/>
            <person name="Kondoh G."/>
            <person name="Araki Y."/>
            <person name="Ikawa M."/>
            <person name="Okabe M."/>
        </authorList>
    </citation>
    <scope>INTERACTION WITH TEX101</scope>
</reference>
<reference key="7">
    <citation type="journal article" date="2014" name="Biol. Reprod.">
        <title>GPI-anchored protein complex, LY6K/TEX101, is required for sperm migration into the oviduct and male fertility in mice.</title>
        <authorList>
            <person name="Fujihara Y."/>
            <person name="Okabe M."/>
            <person name="Ikawa M."/>
        </authorList>
    </citation>
    <scope>INTERACTION WITH LY6K</scope>
    <scope>PROCESSING</scope>
</reference>
<reference key="8">
    <citation type="journal article" date="2020" name="Biol. Reprod.">
        <title>Tmprss12 is required for sperm motility and uterotubal junction migration in mice.</title>
        <authorList>
            <person name="Larasati T."/>
            <person name="Noda T."/>
            <person name="Fujihara Y."/>
            <person name="Shimada K."/>
            <person name="Tobita T."/>
            <person name="Yu Z."/>
            <person name="Matzuk M.M."/>
            <person name="Ikawa M."/>
        </authorList>
    </citation>
    <scope>FUNCTION</scope>
    <scope>DISRUPTION PHENOTYPE</scope>
</reference>
<feature type="signal peptide" evidence="1">
    <location>
        <begin position="1"/>
        <end position="16"/>
    </location>
</feature>
<feature type="chain" id="PRO_5010674208" description="A disintegrin and metallopeptidase domain 3" evidence="1">
    <location>
        <begin position="17"/>
        <end position="822"/>
    </location>
</feature>
<feature type="transmembrane region" description="Helical" evidence="1">
    <location>
        <begin position="689"/>
        <end position="709"/>
    </location>
</feature>
<feature type="domain" description="Peptidase M12B" evidence="4">
    <location>
        <begin position="187"/>
        <end position="384"/>
    </location>
</feature>
<feature type="domain" description="Disintegrin" evidence="2">
    <location>
        <begin position="395"/>
        <end position="484"/>
    </location>
</feature>
<feature type="domain" description="EGF-like" evidence="3">
    <location>
        <begin position="619"/>
        <end position="653"/>
    </location>
</feature>
<feature type="disulfide bond" evidence="4">
    <location>
        <begin position="296"/>
        <end position="379"/>
    </location>
</feature>
<feature type="disulfide bond" evidence="4">
    <location>
        <begin position="338"/>
        <end position="363"/>
    </location>
</feature>
<feature type="disulfide bond" evidence="4">
    <location>
        <begin position="340"/>
        <end position="345"/>
    </location>
</feature>
<feature type="disulfide bond" evidence="2">
    <location>
        <begin position="456"/>
        <end position="476"/>
    </location>
</feature>
<feature type="disulfide bond" evidence="3">
    <location>
        <begin position="623"/>
        <end position="635"/>
    </location>
</feature>
<feature type="disulfide bond" evidence="3">
    <location>
        <begin position="629"/>
        <end position="641"/>
    </location>
</feature>
<feature type="disulfide bond" evidence="3">
    <location>
        <begin position="643"/>
        <end position="652"/>
    </location>
</feature>
<name>ADAM3_MOUSE</name>
<organism>
    <name type="scientific">Mus musculus</name>
    <name type="common">Mouse</name>
    <dbReference type="NCBI Taxonomy" id="10090"/>
    <lineage>
        <taxon>Eukaryota</taxon>
        <taxon>Metazoa</taxon>
        <taxon>Chordata</taxon>
        <taxon>Craniata</taxon>
        <taxon>Vertebrata</taxon>
        <taxon>Euteleostomi</taxon>
        <taxon>Mammalia</taxon>
        <taxon>Eutheria</taxon>
        <taxon>Euarchontoglires</taxon>
        <taxon>Glires</taxon>
        <taxon>Rodentia</taxon>
        <taxon>Myomorpha</taxon>
        <taxon>Muroidea</taxon>
        <taxon>Muridae</taxon>
        <taxon>Murinae</taxon>
        <taxon>Mus</taxon>
        <taxon>Mus</taxon>
    </lineage>
</organism>
<proteinExistence type="evidence at protein level"/>
<comment type="function">
    <text evidence="6 10">Involved in fertilization by controlling sperm migration into the oviduct (PubMed:19339711). Promotes the binding of sperm to the oocyte zona pellucida (PubMed:32529245).</text>
</comment>
<comment type="subunit">
    <text evidence="8 9">Interacts with LY6K (PubMed:24501175). Interacts with TEX101 (PubMed:23633567).</text>
</comment>
<comment type="subcellular location">
    <subcellularLocation>
        <location evidence="5">Cell membrane</location>
        <topology evidence="1">Single-pass membrane protein</topology>
    </subcellularLocation>
    <text evidence="5">Localized in round and elongating spermatids. Localized on the anterior part of the sperm head, and is removed during the acrosome reaction.</text>
</comment>
<comment type="tissue specificity">
    <text evidence="7">Expressed in sperm (at protein level).</text>
</comment>
<comment type="PTM">
    <text evidence="5 9">Initially synthesized as a 110-kDa precursor in round spermatids, and the precursor is then processed into a 42-kDa mature protein during the sperm transport into and/or once in the epididymis.</text>
</comment>
<comment type="disruption phenotype">
    <text evidence="10">Binding of spermatozoa to the zona pellucida is significantly reduced in vitro, however oocyte fertilization was still able to occur.</text>
</comment>
<comment type="caution">
    <text evidence="11">There are two genes in human, ADAM3A and ADAM3B that are non-functional (PubMed:11439107). ADAM3A gene is deleted in infertile men and in some fertile men. ADAM3B transcripts, from testicular RNA of ADAM3A-deficient men, present many stop codons in all possible reading frames. Moreover these two proteins are neither detected in extracts from the testis of a man with the ADAM3A-positive genotype, nor of a man with a ADAM3A-deficient genotype.</text>
</comment>
<gene>
    <name evidence="12" type="primary">Adam3</name>
    <name evidence="12" type="synonym">Cyrn1</name>
</gene>
<keyword id="KW-1003">Cell membrane</keyword>
<keyword id="KW-1015">Disulfide bond</keyword>
<keyword id="KW-0245">EGF-like domain</keyword>
<keyword id="KW-0472">Membrane</keyword>
<keyword id="KW-1185">Reference proteome</keyword>
<keyword id="KW-0732">Signal</keyword>
<keyword id="KW-0812">Transmembrane</keyword>
<keyword id="KW-1133">Transmembrane helix</keyword>
<accession>F8VQ03</accession>
<protein>
    <recommendedName>
        <fullName evidence="12">A disintegrin and metallopeptidase domain 3</fullName>
    </recommendedName>
    <alternativeName>
        <fullName evidence="12">Cyritestin</fullName>
    </alternativeName>
</protein>
<sequence>MLPLFLVLSYLGQVIAAGKDVETPLLQITVPEKIDTNIQDAKEAETQVTYVVRIEGKAYTLQLEKQSFLHPLFGTYLRDKLGTLQPYFSLVKTHCFYQGHAAEIPVSTVTLSTCSGLRGLLQLENITYGIEPLESSATFEHILYEIKNNKIDYSPLKENFANSEQESQSYRILVKPEKGSNSTLTKRILRIKIIMDKAMFDHMGSEVGVATQKVVHIFGLINTMFSQLKMTVMLNSLEIWSEQDKIETNGDADEVLQRFLLWKSKEISQKAQDITYLLLYKDHPDYVGATYHGMACNPNFTAGIALHPKTLAVEGFAIVLSQLLGINLGLAYDDVYNCFCPGSTCIMNPSAIRSQGIKVFSSCSVDEFKQLASQPELDCLRNTSETEFVVQPQGGSYCGNHLLEVPEQCDCGPPETCTHKKCCNPKDCTLIDAAQCGTGPCCDKRTCTIAERGRLCRKSKDQCDFPEFCNGETEGCAPDTKAADLEPCNNETAYCFGGVCRDPDRQCTDLFGKYAKGPNYVCAQEVNLQNDKFGNCHGRCNYSAIFCGKAVCYWNFAEVIQTEKYDVQYTYLGGQVCVSAHLRSQTGTRDDTYVHDGTVCGSGQVCFRGDCLRVHVLRGTRECEADDKCQGHGICNNLNNCQCESGFAPPECDMTPSSPGGSMDDGFWLPFDKSTPLIFKRHGLKYKKVLLISFYILLPFLVVLAFMAVKRMIGKRLAKQNISKALEHKEEAFNRGSMNPGVVSGGNTDQNLMTVPGSFNSYAYHGNTDQNFMTVPGSFNSYSYHGNTDQNFMTVPGSFNSYSYQDVPYYRSIPEDGNDSQQ</sequence>
<evidence type="ECO:0000255" key="1"/>
<evidence type="ECO:0000255" key="2">
    <source>
        <dbReference type="PROSITE-ProRule" id="PRU00068"/>
    </source>
</evidence>
<evidence type="ECO:0000255" key="3">
    <source>
        <dbReference type="PROSITE-ProRule" id="PRU00076"/>
    </source>
</evidence>
<evidence type="ECO:0000255" key="4">
    <source>
        <dbReference type="PROSITE-ProRule" id="PRU00276"/>
    </source>
</evidence>
<evidence type="ECO:0000269" key="5">
    <source>
    </source>
</evidence>
<evidence type="ECO:0000269" key="6">
    <source>
    </source>
</evidence>
<evidence type="ECO:0000269" key="7">
    <source>
    </source>
</evidence>
<evidence type="ECO:0000269" key="8">
    <source>
    </source>
</evidence>
<evidence type="ECO:0000269" key="9">
    <source>
    </source>
</evidence>
<evidence type="ECO:0000269" key="10">
    <source>
    </source>
</evidence>
<evidence type="ECO:0000305" key="11">
    <source>
    </source>
</evidence>
<evidence type="ECO:0000312" key="12">
    <source>
        <dbReference type="MGI" id="MGI:102518"/>
    </source>
</evidence>